<comment type="function">
    <text evidence="1">May play a role in the biogenesis of the viral factories by recruiting and wrapping DNA replication sites in endoplasmic reticulum derived membranes. Later in infection, phosphorylation by the late viral kinase OPG054 might decrease DNA-binding ability and trigger ER membranes disassembly. Binds DNA in vitro.</text>
</comment>
<comment type="subcellular location">
    <subcellularLocation>
        <location evidence="1">Virion</location>
    </subcellularLocation>
    <subcellularLocation>
        <location evidence="1">Host endoplasmic reticulum membrane</location>
        <topology evidence="1">Multi-pass membrane protein</topology>
    </subcellularLocation>
    <subcellularLocation>
        <location evidence="1">Host cytoplasm</location>
    </subcellularLocation>
    <text evidence="1">Localizes to the inside membrane of cytoplasmic virus factories. Component of the core of mature virions.</text>
</comment>
<comment type="induction">
    <text evidence="1">Expressed in the intermediate phase of the viral replicative cycle.</text>
</comment>
<comment type="PTM">
    <text evidence="1">Phosphorylated by OPG054 kinase in vitro.</text>
</comment>
<comment type="similarity">
    <text evidence="3">Belongs to the orthopoxvirus OPG070 family.</text>
</comment>
<evidence type="ECO:0000250" key="1">
    <source>
        <dbReference type="UniProtKB" id="P23372"/>
    </source>
</evidence>
<evidence type="ECO:0000255" key="2"/>
<evidence type="ECO:0000305" key="3"/>
<reference key="1">
    <citation type="journal article" date="1993" name="Nature">
        <title>Potential virulence determinants in terminal regions of variola smallpox virus genome.</title>
        <authorList>
            <person name="Massung R.F."/>
            <person name="Esposito J.J."/>
            <person name="Liu L.I."/>
            <person name="Qi J."/>
            <person name="Utterback T.R."/>
            <person name="Knight J.C."/>
            <person name="Aubin L."/>
            <person name="Yuran T.E."/>
            <person name="Parsons J.M."/>
            <person name="Loparev V.N."/>
            <person name="Selivanov N.A."/>
            <person name="Cavallaro K.F."/>
            <person name="Kerlavage A.R."/>
            <person name="Mahy B.W.J."/>
            <person name="Venter J.C."/>
        </authorList>
    </citation>
    <scope>NUCLEOTIDE SEQUENCE [GENOMIC DNA]</scope>
    <source>
        <strain>Bangladesh-1975</strain>
    </source>
</reference>
<accession>P0DSY8</accession>
<accession>P33820</accession>
<gene>
    <name type="primary">OPG070</name>
    <name type="ORF">E8R</name>
</gene>
<sequence length="273" mass="31898">MAAVVPRFDDVYKNAQRRILDQETFFSRGLGRPLMKNTYLFDNYAYGWIPETAIWSSRYANLDASDYYPISLGLLKKFKFLMSLYKGPIPVYEEKVNTEFIANGSFSGRYVSYLRKFSALPTNEFISFLLLTSIPIYNILFWFKNTQFDITKHTLFRYVYTDNAKHLALARYMHQTGDYKPLFSRLKENYIFTGPVPIGIKDIDHPNLSRARSPSDYETLANISTILYFTKYDPVLMFLLFYVPGYSITTKITPAVEYLMDKLKLTKNDVQLL</sequence>
<name>PG070_VARV</name>
<protein>
    <recommendedName>
        <fullName>Protein OPG070</fullName>
    </recommendedName>
    <alternativeName>
        <fullName>Protein E8</fullName>
    </alternativeName>
</protein>
<dbReference type="EMBL" id="L22579">
    <property type="protein sequence ID" value="AAA60797.1"/>
    <property type="molecule type" value="Genomic_DNA"/>
</dbReference>
<dbReference type="PIR" id="T28487">
    <property type="entry name" value="T28487"/>
</dbReference>
<dbReference type="RefSeq" id="NP_042093.1">
    <property type="nucleotide sequence ID" value="NC_001611.1"/>
</dbReference>
<dbReference type="GeneID" id="1486414"/>
<dbReference type="KEGG" id="vg:1486414"/>
<dbReference type="Proteomes" id="UP000119805">
    <property type="component" value="Segment"/>
</dbReference>
<dbReference type="GO" id="GO:0044167">
    <property type="term" value="C:host cell endoplasmic reticulum membrane"/>
    <property type="evidence" value="ECO:0007669"/>
    <property type="project" value="UniProtKB-SubCell"/>
</dbReference>
<dbReference type="GO" id="GO:0016020">
    <property type="term" value="C:membrane"/>
    <property type="evidence" value="ECO:0007669"/>
    <property type="project" value="UniProtKB-KW"/>
</dbReference>
<dbReference type="GO" id="GO:0044423">
    <property type="term" value="C:virion component"/>
    <property type="evidence" value="ECO:0007669"/>
    <property type="project" value="UniProtKB-KW"/>
</dbReference>
<dbReference type="InterPro" id="IPR005057">
    <property type="entry name" value="Poxvirus_E8"/>
</dbReference>
<dbReference type="Pfam" id="PF03394">
    <property type="entry name" value="Pox_E8"/>
    <property type="match status" value="1"/>
</dbReference>
<dbReference type="PIRSF" id="PIRSF015690">
    <property type="entry name" value="VAC_E8R"/>
    <property type="match status" value="1"/>
</dbReference>
<proteinExistence type="inferred from homology"/>
<organismHost>
    <name type="scientific">Homo sapiens</name>
    <name type="common">Human</name>
    <dbReference type="NCBI Taxonomy" id="9606"/>
</organismHost>
<feature type="chain" id="PRO_0000448230" description="Protein OPG070">
    <location>
        <begin position="1"/>
        <end position="273"/>
    </location>
</feature>
<feature type="transmembrane region" description="Helical" evidence="2">
    <location>
        <begin position="123"/>
        <end position="143"/>
    </location>
</feature>
<feature type="transmembrane region" description="Helical" evidence="2">
    <location>
        <begin position="223"/>
        <end position="243"/>
    </location>
</feature>
<keyword id="KW-1035">Host cytoplasm</keyword>
<keyword id="KW-1038">Host endoplasmic reticulum</keyword>
<keyword id="KW-1043">Host membrane</keyword>
<keyword id="KW-0472">Membrane</keyword>
<keyword id="KW-0597">Phosphoprotein</keyword>
<keyword id="KW-0812">Transmembrane</keyword>
<keyword id="KW-1133">Transmembrane helix</keyword>
<keyword id="KW-0946">Virion</keyword>
<organism>
    <name type="scientific">Variola virus</name>
    <dbReference type="NCBI Taxonomy" id="10255"/>
    <lineage>
        <taxon>Viruses</taxon>
        <taxon>Varidnaviria</taxon>
        <taxon>Bamfordvirae</taxon>
        <taxon>Nucleocytoviricota</taxon>
        <taxon>Pokkesviricetes</taxon>
        <taxon>Chitovirales</taxon>
        <taxon>Poxviridae</taxon>
        <taxon>Chordopoxvirinae</taxon>
        <taxon>Orthopoxvirus</taxon>
    </lineage>
</organism>